<dbReference type="EMBL" id="AABR03113474">
    <property type="status" value="NOT_ANNOTATED_CDS"/>
    <property type="molecule type" value="Genomic_DNA"/>
</dbReference>
<dbReference type="PIR" id="A03135">
    <property type="entry name" value="CQRT"/>
</dbReference>
<dbReference type="RefSeq" id="NP_001102597.1">
    <property type="nucleotide sequence ID" value="NM_001109127.1"/>
</dbReference>
<dbReference type="PDB" id="5H48">
    <property type="method" value="X-ray"/>
    <property type="resolution" value="2.20 A"/>
    <property type="chains" value="A=22-193"/>
</dbReference>
<dbReference type="PDB" id="5H49">
    <property type="method" value="X-ray"/>
    <property type="resolution" value="2.80 A"/>
    <property type="chains" value="A/B/C=22-193"/>
</dbReference>
<dbReference type="PDB" id="5KWR">
    <property type="method" value="X-ray"/>
    <property type="resolution" value="1.79 A"/>
    <property type="chains" value="A=57-193"/>
</dbReference>
<dbReference type="PDBsum" id="5H48"/>
<dbReference type="PDBsum" id="5H49"/>
<dbReference type="PDBsum" id="5KWR"/>
<dbReference type="EMDB" id="EMD-6665"/>
<dbReference type="SMR" id="P63182"/>
<dbReference type="BioGRID" id="270231">
    <property type="interactions" value="1"/>
</dbReference>
<dbReference type="FunCoup" id="P63182">
    <property type="interactions" value="844"/>
</dbReference>
<dbReference type="STRING" id="10116.ENSRNOP00000000011"/>
<dbReference type="GlyCosmos" id="P63182">
    <property type="glycosylation" value="2 sites, No reported glycans"/>
</dbReference>
<dbReference type="GlyGen" id="P63182">
    <property type="glycosylation" value="2 sites"/>
</dbReference>
<dbReference type="PhosphoSitePlus" id="P63182"/>
<dbReference type="PaxDb" id="10116-ENSRNOP00000000011"/>
<dbReference type="Ensembl" id="ENSRNOT00000000011.6">
    <property type="protein sequence ID" value="ENSRNOP00000000011.4"/>
    <property type="gene ID" value="ENSRNOG00000000010.6"/>
</dbReference>
<dbReference type="GeneID" id="498922"/>
<dbReference type="KEGG" id="rno:498922"/>
<dbReference type="AGR" id="RGD:1562813"/>
<dbReference type="CTD" id="869"/>
<dbReference type="RGD" id="1562813">
    <property type="gene designation" value="Cbln1"/>
</dbReference>
<dbReference type="eggNOG" id="ENOG502QVN9">
    <property type="taxonomic scope" value="Eukaryota"/>
</dbReference>
<dbReference type="GeneTree" id="ENSGT00940000159811"/>
<dbReference type="HOGENOM" id="CLU_001074_8_2_1"/>
<dbReference type="InParanoid" id="P63182"/>
<dbReference type="OMA" id="AWLACGQ"/>
<dbReference type="OrthoDB" id="10070467at2759"/>
<dbReference type="PhylomeDB" id="P63182"/>
<dbReference type="TreeFam" id="TF329591"/>
<dbReference type="PRO" id="PR:P63182"/>
<dbReference type="Proteomes" id="UP000002494">
    <property type="component" value="Chromosome 19"/>
</dbReference>
<dbReference type="Bgee" id="ENSRNOG00000000010">
    <property type="expression patterns" value="Expressed in cerebellum and 7 other cell types or tissues"/>
</dbReference>
<dbReference type="GO" id="GO:0005576">
    <property type="term" value="C:extracellular region"/>
    <property type="evidence" value="ECO:0000250"/>
    <property type="project" value="UniProtKB"/>
</dbReference>
<dbReference type="GO" id="GO:0098978">
    <property type="term" value="C:glutamatergic synapse"/>
    <property type="evidence" value="ECO:0000266"/>
    <property type="project" value="RGD"/>
</dbReference>
<dbReference type="GO" id="GO:0098688">
    <property type="term" value="C:parallel fiber to Purkinje cell synapse"/>
    <property type="evidence" value="ECO:0000266"/>
    <property type="project" value="RGD"/>
</dbReference>
<dbReference type="GO" id="GO:0045211">
    <property type="term" value="C:postsynaptic membrane"/>
    <property type="evidence" value="ECO:0000250"/>
    <property type="project" value="UniProtKB"/>
</dbReference>
<dbReference type="GO" id="GO:0045202">
    <property type="term" value="C:synapse"/>
    <property type="evidence" value="ECO:0000266"/>
    <property type="project" value="RGD"/>
</dbReference>
<dbReference type="GO" id="GO:0043083">
    <property type="term" value="C:synaptic cleft"/>
    <property type="evidence" value="ECO:0000266"/>
    <property type="project" value="RGD"/>
</dbReference>
<dbReference type="GO" id="GO:0098820">
    <property type="term" value="C:trans-synaptic protein complex"/>
    <property type="evidence" value="ECO:0000266"/>
    <property type="project" value="RGD"/>
</dbReference>
<dbReference type="GO" id="GO:0042802">
    <property type="term" value="F:identical protein binding"/>
    <property type="evidence" value="ECO:0000266"/>
    <property type="project" value="RGD"/>
</dbReference>
<dbReference type="GO" id="GO:0021707">
    <property type="term" value="P:cerebellar granule cell differentiation"/>
    <property type="evidence" value="ECO:0000250"/>
    <property type="project" value="BHF-UCL"/>
</dbReference>
<dbReference type="GO" id="GO:0051649">
    <property type="term" value="P:establishment of localization in cell"/>
    <property type="evidence" value="ECO:0000266"/>
    <property type="project" value="RGD"/>
</dbReference>
<dbReference type="GO" id="GO:0007157">
    <property type="term" value="P:heterophilic cell-cell adhesion via plasma membrane cell adhesion molecules"/>
    <property type="evidence" value="ECO:0000250"/>
    <property type="project" value="BHF-UCL"/>
</dbReference>
<dbReference type="GO" id="GO:0099558">
    <property type="term" value="P:maintenance of synapse structure"/>
    <property type="evidence" value="ECO:0000250"/>
    <property type="project" value="UniProtKB"/>
</dbReference>
<dbReference type="GO" id="GO:0090394">
    <property type="term" value="P:negative regulation of excitatory postsynaptic potential"/>
    <property type="evidence" value="ECO:0000266"/>
    <property type="project" value="RGD"/>
</dbReference>
<dbReference type="GO" id="GO:1905703">
    <property type="term" value="P:negative regulation of inhibitory synapse assembly"/>
    <property type="evidence" value="ECO:0000250"/>
    <property type="project" value="UniProtKB"/>
</dbReference>
<dbReference type="GO" id="GO:1900454">
    <property type="term" value="P:positive regulation of long-term synaptic depression"/>
    <property type="evidence" value="ECO:0000266"/>
    <property type="project" value="RGD"/>
</dbReference>
<dbReference type="GO" id="GO:0051965">
    <property type="term" value="P:positive regulation of synapse assembly"/>
    <property type="evidence" value="ECO:0000266"/>
    <property type="project" value="RGD"/>
</dbReference>
<dbReference type="GO" id="GO:0009306">
    <property type="term" value="P:protein secretion"/>
    <property type="evidence" value="ECO:0000266"/>
    <property type="project" value="RGD"/>
</dbReference>
<dbReference type="GO" id="GO:0099151">
    <property type="term" value="P:regulation of postsynaptic density assembly"/>
    <property type="evidence" value="ECO:0000266"/>
    <property type="project" value="RGD"/>
</dbReference>
<dbReference type="GO" id="GO:1905606">
    <property type="term" value="P:regulation of presynapse assembly"/>
    <property type="evidence" value="ECO:0000266"/>
    <property type="project" value="RGD"/>
</dbReference>
<dbReference type="GO" id="GO:0007416">
    <property type="term" value="P:synapse assembly"/>
    <property type="evidence" value="ECO:0000266"/>
    <property type="project" value="RGD"/>
</dbReference>
<dbReference type="GO" id="GO:0050808">
    <property type="term" value="P:synapse organization"/>
    <property type="evidence" value="ECO:0000250"/>
    <property type="project" value="UniProtKB"/>
</dbReference>
<dbReference type="GO" id="GO:0099550">
    <property type="term" value="P:trans-synaptic signaling, modulating synaptic transmission"/>
    <property type="evidence" value="ECO:0000266"/>
    <property type="project" value="RGD"/>
</dbReference>
<dbReference type="FunFam" id="2.60.120.40:FF:000002">
    <property type="entry name" value="Cerebellin 4"/>
    <property type="match status" value="1"/>
</dbReference>
<dbReference type="Gene3D" id="2.60.120.40">
    <property type="match status" value="1"/>
</dbReference>
<dbReference type="InterPro" id="IPR001073">
    <property type="entry name" value="C1q_dom"/>
</dbReference>
<dbReference type="InterPro" id="IPR050822">
    <property type="entry name" value="Cerebellin_Synaptic_Org"/>
</dbReference>
<dbReference type="InterPro" id="IPR008983">
    <property type="entry name" value="Tumour_necrosis_fac-like_dom"/>
</dbReference>
<dbReference type="PANTHER" id="PTHR22923:SF5">
    <property type="entry name" value="CEREBELLIN-1"/>
    <property type="match status" value="1"/>
</dbReference>
<dbReference type="PANTHER" id="PTHR22923">
    <property type="entry name" value="CEREBELLIN-RELATED"/>
    <property type="match status" value="1"/>
</dbReference>
<dbReference type="Pfam" id="PF00386">
    <property type="entry name" value="C1q"/>
    <property type="match status" value="1"/>
</dbReference>
<dbReference type="PRINTS" id="PR00007">
    <property type="entry name" value="COMPLEMNTC1Q"/>
</dbReference>
<dbReference type="SMART" id="SM00110">
    <property type="entry name" value="C1Q"/>
    <property type="match status" value="1"/>
</dbReference>
<dbReference type="SUPFAM" id="SSF49842">
    <property type="entry name" value="TNF-like"/>
    <property type="match status" value="1"/>
</dbReference>
<dbReference type="PROSITE" id="PS50871">
    <property type="entry name" value="C1Q"/>
    <property type="match status" value="1"/>
</dbReference>
<feature type="signal peptide" evidence="3">
    <location>
        <begin position="1"/>
        <end position="21"/>
    </location>
</feature>
<feature type="chain" id="PRO_0000274215" description="Cerebellin-1">
    <location>
        <begin position="22"/>
        <end position="193"/>
    </location>
</feature>
<feature type="peptide" id="PRO_0000043588" description="Cerebellin">
    <location>
        <begin position="57"/>
        <end position="72"/>
    </location>
</feature>
<feature type="peptide" id="PRO_0000274216" description="[des-Ser1]-cerebellin">
    <location>
        <begin position="58"/>
        <end position="72"/>
    </location>
</feature>
<feature type="domain" description="C1q" evidence="4">
    <location>
        <begin position="57"/>
        <end position="193"/>
    </location>
</feature>
<feature type="region of interest" description="Essential for interaction with NRXN1 and linker of two C1q trimers into disulfide-linked hexamers" evidence="1">
    <location>
        <begin position="34"/>
        <end position="38"/>
    </location>
</feature>
<feature type="region of interest" description="Necessary for interaction with CBLN3, and homotrimerization" evidence="2">
    <location>
        <begin position="62"/>
        <end position="193"/>
    </location>
</feature>
<feature type="region of interest" description="Essential for interaction with GRID2" evidence="1">
    <location>
        <begin position="122"/>
        <end position="147"/>
    </location>
</feature>
<feature type="glycosylation site" description="N-linked (GlcNAc...) asparagine" evidence="3">
    <location>
        <position position="23"/>
    </location>
</feature>
<feature type="glycosylation site" description="N-linked (GlcNAc...) asparagine" evidence="3">
    <location>
        <position position="79"/>
    </location>
</feature>
<feature type="disulfide bond" description="Interchain" evidence="2">
    <location>
        <position position="34"/>
    </location>
</feature>
<feature type="disulfide bond" description="Interchain" evidence="2">
    <location>
        <position position="38"/>
    </location>
</feature>
<feature type="helix" evidence="10">
    <location>
        <begin position="58"/>
        <end position="60"/>
    </location>
</feature>
<feature type="strand" evidence="10">
    <location>
        <begin position="63"/>
        <end position="67"/>
    </location>
</feature>
<feature type="helix" evidence="10">
    <location>
        <begin position="76"/>
        <end position="81"/>
    </location>
</feature>
<feature type="strand" evidence="10">
    <location>
        <begin position="87"/>
        <end position="93"/>
    </location>
</feature>
<feature type="turn" evidence="10">
    <location>
        <begin position="99"/>
        <end position="102"/>
    </location>
</feature>
<feature type="strand" evidence="10">
    <location>
        <begin position="103"/>
        <end position="105"/>
    </location>
</feature>
<feature type="strand" evidence="10">
    <location>
        <begin position="107"/>
        <end position="120"/>
    </location>
</feature>
<feature type="strand" evidence="10">
    <location>
        <begin position="127"/>
        <end position="133"/>
    </location>
</feature>
<feature type="strand" evidence="10">
    <location>
        <begin position="136"/>
        <end position="143"/>
    </location>
</feature>
<feature type="strand" evidence="10">
    <location>
        <begin position="147"/>
        <end position="149"/>
    </location>
</feature>
<feature type="strand" evidence="10">
    <location>
        <begin position="151"/>
        <end position="161"/>
    </location>
</feature>
<feature type="strand" evidence="10">
    <location>
        <begin position="166"/>
        <end position="174"/>
    </location>
</feature>
<feature type="strand" evidence="10">
    <location>
        <begin position="184"/>
        <end position="192"/>
    </location>
</feature>
<comment type="function">
    <text evidence="1 2">Required for synapse integrity and synaptic plasticity. During cerebellar synapse formation, essential for the matching and maintenance of pre- and post-synaptic elements at parallel fiber-Purkinje cell synapses, the establishment of the proper pattern of climbing fiber-Purkinje cell innervation, and induction of long-term depression at parallel fiber-Purkinje cell synapses. Plays a role as a synaptic organizer that acts bidirectionally on both pre- and post-synaptic components. On the one hand induces accumulation of synaptic vesicles in the pre-synaptic part by binding with NRXN1 and in other hand induces clustering of GRID2 and its associated proteins at the post-synaptic site through association of GRID2. NRXN1-CBLN1-GRID2 complex directly induces parallel fiber protrusions that encapsulate spines of Purkinje cells leading to accumulation of GRID2 and synaptic vesicles. Required for CBLN3 export from the endoplasmic reticulum and secretion (By similarity). NRXN1-CBLN1-GRID2 complex mediates the D-Serine-dependent long term depression signals and AMPA receptor endocytosis (By similarity). Essential for long-term maintenance but not establishment of excitatory synapses (By similarity). Inhibits the formation and function of inhibitory GABAergic synapses in cerebellar Purkinje cells (By similarity).</text>
</comment>
<comment type="function">
    <text evidence="5 6">The cerebellin exerts neuromodulatory functions. Directly stimulates norepinephrine release via the adenylate cyclase/PKA-dependent signaling pathway; and indirectly enhances adrenocortical secretion in vivo, through a paracrine mechanism involving medullary catecholamine release. A conversion to [des-Ser1]-cerebellin by endopeptidases seems to be required for its autocrine-paracrine regulatory functions.</text>
</comment>
<comment type="subunit">
    <text evidence="1 2">Homohexamer; disulfide-linked homotrimers. The trimers are assembled via the globular C1q domains. The trimers associate via N-terminal cysteine residues to form disulfide-linked hexamers. May form oligomers with CBLN2, CBLN3 and CBLN4 prior to secretion. Once secreted, does not interact with other CBLN family members. Interacts with GRID1. Interacts with NRXN1 and NRXN2 long (alpha) and short (beta) isoforms produced by alternative promoter usage. Competes with NLGN1 for NRXN1-binding. Weakly interacts with NRXN3 short isoform and not at all with NRXN3 long isoform (By similarity). Interacts (via C1q domain) with GRID2; GRID2-binding is calcium-independent; CBLN1 hexamers anchor GRID2 N-terminal domain dimers to monomeric NRXN1 isoform beta; promotes synaptogenesis and mediates the D-Serine-dependent long term depression signals and AMPA receptor endocytosis (By similarity). Interacts with OTOL1 (By similarity).</text>
</comment>
<comment type="subcellular location">
    <subcellularLocation>
        <location evidence="7">Secreted</location>
    </subcellularLocation>
    <subcellularLocation>
        <location evidence="2">Postsynaptic cell membrane</location>
    </subcellularLocation>
</comment>
<comment type="tissue specificity">
    <text evidence="6 7 8">Localized in the Purkinje cells. Cerebellin is expressed in adrenal gland /adrenal cortex (at protein level). In the cerebellum, [des-Ser1]-cerebellin is more abundant than cerebellin. At lower levels also found in heart, kidney stomach and gastrointestinal tract.</text>
</comment>
<comment type="PTM">
    <text evidence="2">The proteolytic processing to yield cerebellin seems to occur either prior to the secretion by presynaptic neurons and subsequent oligomerization or in some other location after release of the mature protein.</text>
</comment>
<comment type="PTM">
    <text evidence="2">Sialoglycoprotein.</text>
</comment>
<comment type="caution">
    <text evidence="9">Initially the cerebellin peptide was thought to present the biological active entity.</text>
</comment>
<proteinExistence type="evidence at protein level"/>
<evidence type="ECO:0000250" key="1">
    <source>
        <dbReference type="UniProtKB" id="P23435"/>
    </source>
</evidence>
<evidence type="ECO:0000250" key="2">
    <source>
        <dbReference type="UniProtKB" id="Q9R171"/>
    </source>
</evidence>
<evidence type="ECO:0000255" key="3"/>
<evidence type="ECO:0000255" key="4">
    <source>
        <dbReference type="PROSITE-ProRule" id="PRU00368"/>
    </source>
</evidence>
<evidence type="ECO:0000269" key="5">
    <source>
    </source>
</evidence>
<evidence type="ECO:0000269" key="6">
    <source>
    </source>
</evidence>
<evidence type="ECO:0000269" key="7">
    <source>
    </source>
</evidence>
<evidence type="ECO:0000269" key="8">
    <source>
    </source>
</evidence>
<evidence type="ECO:0000305" key="9"/>
<evidence type="ECO:0007829" key="10">
    <source>
        <dbReference type="PDB" id="5KWR"/>
    </source>
</evidence>
<sequence length="193" mass="21083">MLGVVELLLLGAAWLAGPARGQNETEPIVLEGKCLVVCDSNPTSDPTGTALGISVRSGSAKVAFSAIRSTNHEPSEMSNRTMIIYFDQVLVNIGNNFDSERSTFIAPRKGIYSFNFHVVKVYNRQTIQVSLMLNGWPVISAFAGDQDVTREAASNGVLIQMEKGDRAYLKLERGNLMGGWKYSTFSGFLVFPL</sequence>
<organism>
    <name type="scientific">Rattus norvegicus</name>
    <name type="common">Rat</name>
    <dbReference type="NCBI Taxonomy" id="10116"/>
    <lineage>
        <taxon>Eukaryota</taxon>
        <taxon>Metazoa</taxon>
        <taxon>Chordata</taxon>
        <taxon>Craniata</taxon>
        <taxon>Vertebrata</taxon>
        <taxon>Euteleostomi</taxon>
        <taxon>Mammalia</taxon>
        <taxon>Eutheria</taxon>
        <taxon>Euarchontoglires</taxon>
        <taxon>Glires</taxon>
        <taxon>Rodentia</taxon>
        <taxon>Myomorpha</taxon>
        <taxon>Muroidea</taxon>
        <taxon>Muridae</taxon>
        <taxon>Murinae</taxon>
        <taxon>Rattus</taxon>
    </lineage>
</organism>
<name>CBLN1_RAT</name>
<gene>
    <name type="primary">Cbln1</name>
</gene>
<keyword id="KW-0002">3D-structure</keyword>
<keyword id="KW-1003">Cell membrane</keyword>
<keyword id="KW-0903">Direct protein sequencing</keyword>
<keyword id="KW-1015">Disulfide bond</keyword>
<keyword id="KW-0325">Glycoprotein</keyword>
<keyword id="KW-0472">Membrane</keyword>
<keyword id="KW-0628">Postsynaptic cell membrane</keyword>
<keyword id="KW-1185">Reference proteome</keyword>
<keyword id="KW-0964">Secreted</keyword>
<keyword id="KW-0730">Sialic acid</keyword>
<keyword id="KW-0732">Signal</keyword>
<keyword id="KW-0770">Synapse</keyword>
<accession>P63182</accession>
<accession>P02682</accession>
<accession>P23436</accession>
<protein>
    <recommendedName>
        <fullName>Cerebellin-1</fullName>
    </recommendedName>
    <alternativeName>
        <fullName>Precerebellin</fullName>
    </alternativeName>
    <component>
        <recommendedName>
            <fullName>Cerebellin</fullName>
            <shortName>CER</shortName>
        </recommendedName>
    </component>
    <component>
        <recommendedName>
            <fullName>[des-Ser1]-cerebellin</fullName>
        </recommendedName>
        <alternativeName>
            <fullName>des-Ser(1)-cerebellin</fullName>
            <shortName>[des-Ser1]CER</shortName>
            <shortName>des-CER</shortName>
            <shortName>des-Ser1CER</shortName>
        </alternativeName>
    </component>
</protein>
<reference key="1">
    <citation type="journal article" date="2004" name="Nature">
        <title>Genome sequence of the Brown Norway rat yields insights into mammalian evolution.</title>
        <authorList>
            <person name="Gibbs R.A."/>
            <person name="Weinstock G.M."/>
            <person name="Metzker M.L."/>
            <person name="Muzny D.M."/>
            <person name="Sodergren E.J."/>
            <person name="Scherer S."/>
            <person name="Scott G."/>
            <person name="Steffen D."/>
            <person name="Worley K.C."/>
            <person name="Burch P.E."/>
            <person name="Okwuonu G."/>
            <person name="Hines S."/>
            <person name="Lewis L."/>
            <person name="Deramo C."/>
            <person name="Delgado O."/>
            <person name="Dugan-Rocha S."/>
            <person name="Miner G."/>
            <person name="Morgan M."/>
            <person name="Hawes A."/>
            <person name="Gill R."/>
            <person name="Holt R.A."/>
            <person name="Adams M.D."/>
            <person name="Amanatides P.G."/>
            <person name="Baden-Tillson H."/>
            <person name="Barnstead M."/>
            <person name="Chin S."/>
            <person name="Evans C.A."/>
            <person name="Ferriera S."/>
            <person name="Fosler C."/>
            <person name="Glodek A."/>
            <person name="Gu Z."/>
            <person name="Jennings D."/>
            <person name="Kraft C.L."/>
            <person name="Nguyen T."/>
            <person name="Pfannkoch C.M."/>
            <person name="Sitter C."/>
            <person name="Sutton G.G."/>
            <person name="Venter J.C."/>
            <person name="Woodage T."/>
            <person name="Smith D."/>
            <person name="Lee H.-M."/>
            <person name="Gustafson E."/>
            <person name="Cahill P."/>
            <person name="Kana A."/>
            <person name="Doucette-Stamm L."/>
            <person name="Weinstock K."/>
            <person name="Fechtel K."/>
            <person name="Weiss R.B."/>
            <person name="Dunn D.M."/>
            <person name="Green E.D."/>
            <person name="Blakesley R.W."/>
            <person name="Bouffard G.G."/>
            <person name="De Jong P.J."/>
            <person name="Osoegawa K."/>
            <person name="Zhu B."/>
            <person name="Marra M."/>
            <person name="Schein J."/>
            <person name="Bosdet I."/>
            <person name="Fjell C."/>
            <person name="Jones S."/>
            <person name="Krzywinski M."/>
            <person name="Mathewson C."/>
            <person name="Siddiqui A."/>
            <person name="Wye N."/>
            <person name="McPherson J."/>
            <person name="Zhao S."/>
            <person name="Fraser C.M."/>
            <person name="Shetty J."/>
            <person name="Shatsman S."/>
            <person name="Geer K."/>
            <person name="Chen Y."/>
            <person name="Abramzon S."/>
            <person name="Nierman W.C."/>
            <person name="Havlak P.H."/>
            <person name="Chen R."/>
            <person name="Durbin K.J."/>
            <person name="Egan A."/>
            <person name="Ren Y."/>
            <person name="Song X.-Z."/>
            <person name="Li B."/>
            <person name="Liu Y."/>
            <person name="Qin X."/>
            <person name="Cawley S."/>
            <person name="Cooney A.J."/>
            <person name="D'Souza L.M."/>
            <person name="Martin K."/>
            <person name="Wu J.Q."/>
            <person name="Gonzalez-Garay M.L."/>
            <person name="Jackson A.R."/>
            <person name="Kalafus K.J."/>
            <person name="McLeod M.P."/>
            <person name="Milosavljevic A."/>
            <person name="Virk D."/>
            <person name="Volkov A."/>
            <person name="Wheeler D.A."/>
            <person name="Zhang Z."/>
            <person name="Bailey J.A."/>
            <person name="Eichler E.E."/>
            <person name="Tuzun E."/>
            <person name="Birney E."/>
            <person name="Mongin E."/>
            <person name="Ureta-Vidal A."/>
            <person name="Woodwark C."/>
            <person name="Zdobnov E."/>
            <person name="Bork P."/>
            <person name="Suyama M."/>
            <person name="Torrents D."/>
            <person name="Alexandersson M."/>
            <person name="Trask B.J."/>
            <person name="Young J.M."/>
            <person name="Huang H."/>
            <person name="Wang H."/>
            <person name="Xing H."/>
            <person name="Daniels S."/>
            <person name="Gietzen D."/>
            <person name="Schmidt J."/>
            <person name="Stevens K."/>
            <person name="Vitt U."/>
            <person name="Wingrove J."/>
            <person name="Camara F."/>
            <person name="Mar Alba M."/>
            <person name="Abril J.F."/>
            <person name="Guigo R."/>
            <person name="Smit A."/>
            <person name="Dubchak I."/>
            <person name="Rubin E.M."/>
            <person name="Couronne O."/>
            <person name="Poliakov A."/>
            <person name="Huebner N."/>
            <person name="Ganten D."/>
            <person name="Goesele C."/>
            <person name="Hummel O."/>
            <person name="Kreitler T."/>
            <person name="Lee Y.-A."/>
            <person name="Monti J."/>
            <person name="Schulz H."/>
            <person name="Zimdahl H."/>
            <person name="Himmelbauer H."/>
            <person name="Lehrach H."/>
            <person name="Jacob H.J."/>
            <person name="Bromberg S."/>
            <person name="Gullings-Handley J."/>
            <person name="Jensen-Seaman M.I."/>
            <person name="Kwitek A.E."/>
            <person name="Lazar J."/>
            <person name="Pasko D."/>
            <person name="Tonellato P.J."/>
            <person name="Twigger S."/>
            <person name="Ponting C.P."/>
            <person name="Duarte J.M."/>
            <person name="Rice S."/>
            <person name="Goodstadt L."/>
            <person name="Beatson S.A."/>
            <person name="Emes R.D."/>
            <person name="Winter E.E."/>
            <person name="Webber C."/>
            <person name="Brandt P."/>
            <person name="Nyakatura G."/>
            <person name="Adetobi M."/>
            <person name="Chiaromonte F."/>
            <person name="Elnitski L."/>
            <person name="Eswara P."/>
            <person name="Hardison R.C."/>
            <person name="Hou M."/>
            <person name="Kolbe D."/>
            <person name="Makova K."/>
            <person name="Miller W."/>
            <person name="Nekrutenko A."/>
            <person name="Riemer C."/>
            <person name="Schwartz S."/>
            <person name="Taylor J."/>
            <person name="Yang S."/>
            <person name="Zhang Y."/>
            <person name="Lindpaintner K."/>
            <person name="Andrews T.D."/>
            <person name="Caccamo M."/>
            <person name="Clamp M."/>
            <person name="Clarke L."/>
            <person name="Curwen V."/>
            <person name="Durbin R.M."/>
            <person name="Eyras E."/>
            <person name="Searle S.M."/>
            <person name="Cooper G.M."/>
            <person name="Batzoglou S."/>
            <person name="Brudno M."/>
            <person name="Sidow A."/>
            <person name="Stone E.A."/>
            <person name="Payseur B.A."/>
            <person name="Bourque G."/>
            <person name="Lopez-Otin C."/>
            <person name="Puente X.S."/>
            <person name="Chakrabarti K."/>
            <person name="Chatterji S."/>
            <person name="Dewey C."/>
            <person name="Pachter L."/>
            <person name="Bray N."/>
            <person name="Yap V.B."/>
            <person name="Caspi A."/>
            <person name="Tesler G."/>
            <person name="Pevzner P.A."/>
            <person name="Haussler D."/>
            <person name="Roskin K.M."/>
            <person name="Baertsch R."/>
            <person name="Clawson H."/>
            <person name="Furey T.S."/>
            <person name="Hinrichs A.S."/>
            <person name="Karolchik D."/>
            <person name="Kent W.J."/>
            <person name="Rosenbloom K.R."/>
            <person name="Trumbower H."/>
            <person name="Weirauch M."/>
            <person name="Cooper D.N."/>
            <person name="Stenson P.D."/>
            <person name="Ma B."/>
            <person name="Brent M."/>
            <person name="Arumugam M."/>
            <person name="Shteynberg D."/>
            <person name="Copley R.R."/>
            <person name="Taylor M.S."/>
            <person name="Riethman H."/>
            <person name="Mudunuri U."/>
            <person name="Peterson J."/>
            <person name="Guyer M."/>
            <person name="Felsenfeld A."/>
            <person name="Old S."/>
            <person name="Mockrin S."/>
            <person name="Collins F.S."/>
        </authorList>
    </citation>
    <scope>NUCLEOTIDE SEQUENCE [LARGE SCALE GENOMIC DNA]</scope>
    <source>
        <strain>Brown Norway</strain>
    </source>
</reference>
<reference key="2">
    <citation type="journal article" date="1984" name="Proc. Natl. Acad. Sci. U.S.A.">
        <title>Isolation and sequencing of two cerebellum-specific peptides.</title>
        <authorList>
            <person name="Slemmon J.R."/>
            <person name="Blacher R."/>
            <person name="Danho W."/>
            <person name="Hempstead J.L."/>
            <person name="Morgan J.I."/>
        </authorList>
    </citation>
    <scope>PROTEIN SEQUENCE OF 57-72 (CEREBELLIN AND [DES-SER1]-CEREBELLIN)</scope>
</reference>
<reference key="3">
    <citation type="journal article" date="1988" name="Neuroscience">
        <title>Cerebellin-like peptide: tissue distribution in rat and guinea-pig and its release from rat cerebellum, hypothalamus and cerebellar synaptosomes in vitro.</title>
        <authorList>
            <person name="Burnet P.W."/>
            <person name="Bretherton-Watt D."/>
            <person name="Ghatei M.A."/>
            <person name="Bloom S.R."/>
        </authorList>
    </citation>
    <scope>TISSUE SPECIFICITY</scope>
    <scope>SUBCELLULAR LOCATION (CEREBELLIN)</scope>
</reference>
<reference key="4">
    <citation type="journal article" date="1988" name="Synapse">
        <title>Cerebellin and related postsynaptic peptides in the brain of normal and neurodevelopmentally mutant vertebrates.</title>
        <authorList>
            <person name="Morgan J.I."/>
            <person name="Slemmon J.R."/>
            <person name="Danho W."/>
            <person name="Hempstead J."/>
            <person name="Berrebi A.S."/>
            <person name="Mugnaini E."/>
        </authorList>
    </citation>
    <scope>TISSUE SPECIFICITY</scope>
</reference>
<reference key="5">
    <citation type="journal article" date="2000" name="Neuropeptides">
        <title>Cerebellin stimulates the secretory activity of the rat adrenal gland: in vitro and in vivo studies.</title>
        <authorList>
            <person name="Albertin G."/>
            <person name="Malendowicz L.K."/>
            <person name="Macchi C."/>
            <person name="Markowska A."/>
            <person name="Nussdorfer G.G."/>
        </authorList>
    </citation>
    <scope>FUNCTION (CEREBELLIN)</scope>
</reference>
<reference key="6">
    <citation type="journal article" date="2005" name="Int. J. Mol. Med.">
        <title>Cerebellin in the rat adrenal gland: gene expression and effects of CER and [des-Ser1]CER on the secretion and growth of cultured adrenocortical cells.</title>
        <authorList>
            <person name="Rucinski M."/>
            <person name="Albertin G."/>
            <person name="Spinazzi R."/>
            <person name="Ziolkowska A."/>
            <person name="Nussdorfer G.G."/>
            <person name="Malendowicz L.K."/>
        </authorList>
    </citation>
    <scope>FUNCTION ([DES-SER1]-CEREBELLIN)</scope>
    <scope>TISSUE SPECIFICITY</scope>
</reference>